<evidence type="ECO:0000250" key="1"/>
<evidence type="ECO:0000250" key="2">
    <source>
        <dbReference type="UniProtKB" id="P32926"/>
    </source>
</evidence>
<evidence type="ECO:0000250" key="3">
    <source>
        <dbReference type="UniProtKB" id="Q7YRU7"/>
    </source>
</evidence>
<evidence type="ECO:0000255" key="4"/>
<evidence type="ECO:0000255" key="5">
    <source>
        <dbReference type="PROSITE-ProRule" id="PRU00043"/>
    </source>
</evidence>
<evidence type="ECO:0000256" key="6">
    <source>
        <dbReference type="SAM" id="MobiDB-lite"/>
    </source>
</evidence>
<evidence type="ECO:0000269" key="7">
    <source>
    </source>
</evidence>
<evidence type="ECO:0000269" key="8">
    <source>
    </source>
</evidence>
<evidence type="ECO:0000269" key="9">
    <source>
    </source>
</evidence>
<evidence type="ECO:0000269" key="10">
    <source>
    </source>
</evidence>
<evidence type="ECO:0000269" key="11">
    <source>
    </source>
</evidence>
<evidence type="ECO:0000269" key="12">
    <source>
    </source>
</evidence>
<evidence type="ECO:0000303" key="13">
    <source>
    </source>
</evidence>
<evidence type="ECO:0000305" key="14"/>
<name>DSG3_MOUSE</name>
<feature type="signal peptide" evidence="14">
    <location>
        <begin position="1"/>
        <end position="23"/>
    </location>
</feature>
<feature type="propeptide" id="PRO_0000003853" evidence="14">
    <location>
        <begin position="24"/>
        <end position="49"/>
    </location>
</feature>
<feature type="chain" id="PRO_0000003854" description="Desmoglein-3">
    <location>
        <begin position="50"/>
        <end position="993"/>
    </location>
</feature>
<feature type="topological domain" description="Extracellular" evidence="4">
    <location>
        <begin position="50"/>
        <end position="617"/>
    </location>
</feature>
<feature type="transmembrane region" description="Helical" evidence="4">
    <location>
        <begin position="618"/>
        <end position="638"/>
    </location>
</feature>
<feature type="topological domain" description="Cytoplasmic" evidence="4">
    <location>
        <begin position="639"/>
        <end position="993"/>
    </location>
</feature>
<feature type="domain" description="Cadherin 1" evidence="5">
    <location>
        <begin position="50"/>
        <end position="157"/>
    </location>
</feature>
<feature type="domain" description="Cadherin 2" evidence="5">
    <location>
        <begin position="158"/>
        <end position="267"/>
    </location>
</feature>
<feature type="domain" description="Cadherin 3" evidence="5">
    <location>
        <begin position="268"/>
        <end position="388"/>
    </location>
</feature>
<feature type="domain" description="Cadherin 4" evidence="5">
    <location>
        <begin position="384"/>
        <end position="495"/>
    </location>
</feature>
<feature type="repeat" description="Desmoglein repeat 1">
    <location>
        <begin position="905"/>
        <end position="930"/>
    </location>
</feature>
<feature type="repeat" description="Desmoglein repeat 2">
    <location>
        <begin position="931"/>
        <end position="961"/>
    </location>
</feature>
<feature type="region of interest" description="Required for interaction with CTNND1 and localization at cell-cell junctions" evidence="8">
    <location>
        <begin position="641"/>
        <end position="714"/>
    </location>
</feature>
<feature type="region of interest" description="Disordered" evidence="6">
    <location>
        <begin position="845"/>
        <end position="876"/>
    </location>
</feature>
<feature type="glycosylation site" description="N-linked (GlcNAc...) asparagine" evidence="4">
    <location>
        <position position="110"/>
    </location>
</feature>
<feature type="glycosylation site" description="N-linked (GlcNAc...) asparagine" evidence="4">
    <location>
        <position position="180"/>
    </location>
</feature>
<feature type="glycosylation site" description="N-linked (GlcNAc...) asparagine" evidence="4">
    <location>
        <position position="459"/>
    </location>
</feature>
<feature type="glycosylation site" description="N-linked (GlcNAc...) asparagine" evidence="4">
    <location>
        <position position="546"/>
    </location>
</feature>
<feature type="splice variant" id="VSP_012905" description="In isoform 2." evidence="13">
    <original>YQTLPGSLEVTQTGSKICHTLSGNQETSVMSTSGSVHPAVAIPDPLQLGNYLLT</original>
    <variation>QYLFLLLPSNEEAGARIHRAPSTNPRLLLLCLVHSEQRSVHSQYGSDAQGMNTL</variation>
    <location>
        <begin position="876"/>
        <end position="929"/>
    </location>
</feature>
<feature type="splice variant" id="VSP_012906" description="In isoform 2." evidence="13">
    <location>
        <begin position="930"/>
        <end position="993"/>
    </location>
</feature>
<feature type="sequence conflict" description="In Ref. 2; BAC26246/BAC29718." evidence="14" ref="2">
    <original>G</original>
    <variation>A</variation>
    <location>
        <position position="816"/>
    </location>
</feature>
<feature type="sequence conflict" description="In Ref. 2; BAC29718." evidence="14" ref="2">
    <original>P</original>
    <variation>H</variation>
    <location>
        <position position="941"/>
    </location>
</feature>
<accession>O35902</accession>
<accession>Q8CB02</accession>
<accession>Q8CE48</accession>
<comment type="function">
    <text evidence="2 3 9 11 12">A component of desmosome cell-cell junctions which are required for positive regulation of cellular adhesion (PubMed:9166409). Required for adherens and desmosome junction assembly in response to mechanical force in keratinocytes (By similarity). Required for desmosome-mediated cell-cell adhesion of cells surrounding the telogen hair club and the basal layer of the outer root sheath epithelium, consequently is essential for the anchoring of telogen hairs in the hair follicle (PubMed:9166409, PubMed:9701552). Required for the maintenance of the epithelial barrier via promoting desmosome-mediated intercellular attachment of suprabasal epithelium to basal cells (PubMed:9166409). May play a role in the protein stability of the desmosome plaque components DSP, JUP, PKP1, PKP2 and PKP3 (By similarity). Required for YAP1 localization at the plasma membrane in keratinocytes in response to mechanical strain, via the formation of an interaction complex composed of DSG3, PKP1 and YWHAG (By similarity). May also be involved in the positive regulation of YAP1 target gene transcription and as a result cell proliferation (By similarity). Positively regulates cellular contractility and cell junction formation via organization of cortical F-actin bundles and anchoring of actin to tight junctions, in conjunction with RAC1 (By similarity). The cytoplasmic pool of DSG3 is required for the localization of CDH1 and CTNNB1 at developing adherens junctions, potentially via modulation of SRC activity (By similarity). Inhibits keratinocyte migration via suppression of p38MAPK signaling, may therefore play a role in moderating wound healing (PubMed:26763450).</text>
</comment>
<comment type="subunit">
    <text evidence="2 8 9 10">Homodimer (PubMed:30949721). Part of a complex that contains DSG3, PKP1, YAP1 and YWHAG; the complex is required for localization of DSG3 and YAP1 to the cell membrane in keratinocytes (By similarity). Interacts with PKP2. Interacts with CTNND1; the interaction facilitates DSG3 localization and retention at cell-cell junctions (PubMed:18343367). Interacts with CDH1; the interaction is required for CDH1 localization to developing adherens junctions (By similarity). Interacts with RAC1; the interaction is required for DSG3 translocation to cell-cell junctions, organization of cortical F-actin bundles and actin anchoring at cell-cell junctions (By similarity). Interacts with DSC3; the interaction may limit the interaction of DSC3 with p38MAPK family members and therefore repress p38MAPK signaling activation (PubMed:26763450).</text>
</comment>
<comment type="subcellular location">
    <subcellularLocation>
        <location evidence="12">Cell membrane</location>
        <topology evidence="4">Single-pass type I membrane protein</topology>
    </subcellularLocation>
    <subcellularLocation>
        <location evidence="11">Cell junction</location>
        <location evidence="11">Desmosome</location>
    </subcellularLocation>
    <subcellularLocation>
        <location evidence="2">Cytoplasm</location>
    </subcellularLocation>
    <subcellularLocation>
        <location evidence="3">Cell junction</location>
        <location evidence="3">Tight junction</location>
    </subcellularLocation>
    <subcellularLocation>
        <location evidence="8">Cell junction</location>
    </subcellularLocation>
</comment>
<comment type="alternative products">
    <event type="alternative splicing"/>
    <isoform>
        <id>O35902-1</id>
        <name>1</name>
        <sequence type="displayed"/>
    </isoform>
    <isoform>
        <id>O35902-2</id>
        <name>2</name>
        <sequence type="described" ref="VSP_012905 VSP_012906"/>
    </isoform>
</comment>
<comment type="tissue specificity">
    <text evidence="7 11 12">Expressed in the basal layer of the outer root sheath of the telogen hair club, specifically at the cell membrane between the apex of the cells and the surrounding hair club (at protein level) (PubMed:9701552). Expression is less abundant between the lateral margins of the outer root sheath basal cells (at protein level) (PubMed:9701552). Expressed in epidermis (PubMed:12787123). Expressed in the epithelium of the tongue (PubMed:9166409).</text>
</comment>
<comment type="developmental stage">
    <text evidence="7">Expressed in embryo at 7 to 17 dpc.</text>
</comment>
<comment type="domain">
    <text evidence="1">Three calcium ions are usually bound at the interface of each cadherin domain and rigidify the connections, imparting a strong curvature to the full-length ectodomain.</text>
</comment>
<comment type="disruption phenotype">
    <text evidence="9 11 12">Knockout mice are born at the expected Mendelian rate with no observed differences in prenatal development (PubMed:9166409). Decrease in body weight and overall body fat is first evident at 8-10 days of age, weight difference becomes significant following start of solid food at 15-20 days of age (PubMed:9166409). Oral mucosa show a spectrum of lesions, including inflammatory erosions that prevent the mice effectively feeding (PubMed:9166409). Early oral lesions show suprabasal acantholysis with intact suprabasal epithelium separated from basal cells, subsequently basal cells are separated from each other and the tongue suprabasal epithelium is lost (PubMed:9166409). Suckling of pups causes erosions around the nipples of mothers, with some adults showing suprabasal blistering on the skin around the virginal epithelia, eyes, eyelids, mucocutaneous conjunctiva and snout (PubMed:9166409). Epithelial lesions show cellular detachment primarily at the apical and lateral surfaces of basal cells, as a result the acantholytic cleft is formed (PubMed:9166409). Hemidesmosomes are structurally normal however acantholytic cells retain 'half' desmosomes that contain the intracytoplasmic dense plaque with attached intermediate filaments, along the cell membrane that abuts the lesion cleavage plane (PubMed:9166409, PubMed:9701552). Initial hair growth over the first 15 days of age is normal, however at around day 20 mice begin to lose fur beginning on the forehead and proceeding down the back (PubMed:26763450, PubMed:9166409, PubMed:9701552). Hair pull test at 18 days of age results in significant loss of hair suggesting loss of telogen hair anchorage (PubMed:9701552). Baldness is evident on most of head and at least part of the back one week after baldness becomes apparent (PubMed:26763450, PubMed:9701552). Delay by up to 8 days in the initiation of second anagen, which usually occurs between days 22 and 23 of age (PubMed:9701552). Older mice show loss of hair followed by regrowth in a mosaic pattern (PubMed:9701552). No morphological changes in anagen phase hair follicles, however early telogen stage hair follicles show separation between the cells surrounding the telogen hair club and the outer root sheath (PubMed:9701552). Bald skin areas show empty, dilated telogen hair follicles with intact outer root sheaths (PubMed:9701552). Decrease in the number of desmosomes between the epithelial cell layers surrounding telogen hair clubs, epithelial cell surfaces show microvillus extensions that protrude into enlarged intercellular spaces (PubMed:9701552). Increase in p38MAPK signaling activation in areas of skin lesions (PubMed:26763450).</text>
</comment>
<reference evidence="14" key="1">
    <citation type="journal article" date="1994" name="Mamm. Genome">
        <title>cDNA cloning and chromosomal assignment of the mouse gene for desmoglein 3 (Dsg3), the pemphigus vulgaris antigen.</title>
        <authorList>
            <person name="Ishikawa H."/>
            <person name="Silos S.A."/>
            <person name="Tamai K."/>
            <person name="Copeland N.G."/>
            <person name="Gilbert D.J."/>
            <person name="Jenkins N.A."/>
            <person name="Uitto J."/>
        </authorList>
    </citation>
    <scope>NUCLEOTIDE SEQUENCE [MRNA] (ISOFORM 1)</scope>
    <source>
        <strain>BALB/cJ</strain>
    </source>
</reference>
<reference key="2">
    <citation type="journal article" date="2005" name="Science">
        <title>The transcriptional landscape of the mammalian genome.</title>
        <authorList>
            <person name="Carninci P."/>
            <person name="Kasukawa T."/>
            <person name="Katayama S."/>
            <person name="Gough J."/>
            <person name="Frith M.C."/>
            <person name="Maeda N."/>
            <person name="Oyama R."/>
            <person name="Ravasi T."/>
            <person name="Lenhard B."/>
            <person name="Wells C."/>
            <person name="Kodzius R."/>
            <person name="Shimokawa K."/>
            <person name="Bajic V.B."/>
            <person name="Brenner S.E."/>
            <person name="Batalov S."/>
            <person name="Forrest A.R."/>
            <person name="Zavolan M."/>
            <person name="Davis M.J."/>
            <person name="Wilming L.G."/>
            <person name="Aidinis V."/>
            <person name="Allen J.E."/>
            <person name="Ambesi-Impiombato A."/>
            <person name="Apweiler R."/>
            <person name="Aturaliya R.N."/>
            <person name="Bailey T.L."/>
            <person name="Bansal M."/>
            <person name="Baxter L."/>
            <person name="Beisel K.W."/>
            <person name="Bersano T."/>
            <person name="Bono H."/>
            <person name="Chalk A.M."/>
            <person name="Chiu K.P."/>
            <person name="Choudhary V."/>
            <person name="Christoffels A."/>
            <person name="Clutterbuck D.R."/>
            <person name="Crowe M.L."/>
            <person name="Dalla E."/>
            <person name="Dalrymple B.P."/>
            <person name="de Bono B."/>
            <person name="Della Gatta G."/>
            <person name="di Bernardo D."/>
            <person name="Down T."/>
            <person name="Engstrom P."/>
            <person name="Fagiolini M."/>
            <person name="Faulkner G."/>
            <person name="Fletcher C.F."/>
            <person name="Fukushima T."/>
            <person name="Furuno M."/>
            <person name="Futaki S."/>
            <person name="Gariboldi M."/>
            <person name="Georgii-Hemming P."/>
            <person name="Gingeras T.R."/>
            <person name="Gojobori T."/>
            <person name="Green R.E."/>
            <person name="Gustincich S."/>
            <person name="Harbers M."/>
            <person name="Hayashi Y."/>
            <person name="Hensch T.K."/>
            <person name="Hirokawa N."/>
            <person name="Hill D."/>
            <person name="Huminiecki L."/>
            <person name="Iacono M."/>
            <person name="Ikeo K."/>
            <person name="Iwama A."/>
            <person name="Ishikawa T."/>
            <person name="Jakt M."/>
            <person name="Kanapin A."/>
            <person name="Katoh M."/>
            <person name="Kawasawa Y."/>
            <person name="Kelso J."/>
            <person name="Kitamura H."/>
            <person name="Kitano H."/>
            <person name="Kollias G."/>
            <person name="Krishnan S.P."/>
            <person name="Kruger A."/>
            <person name="Kummerfeld S.K."/>
            <person name="Kurochkin I.V."/>
            <person name="Lareau L.F."/>
            <person name="Lazarevic D."/>
            <person name="Lipovich L."/>
            <person name="Liu J."/>
            <person name="Liuni S."/>
            <person name="McWilliam S."/>
            <person name="Madan Babu M."/>
            <person name="Madera M."/>
            <person name="Marchionni L."/>
            <person name="Matsuda H."/>
            <person name="Matsuzawa S."/>
            <person name="Miki H."/>
            <person name="Mignone F."/>
            <person name="Miyake S."/>
            <person name="Morris K."/>
            <person name="Mottagui-Tabar S."/>
            <person name="Mulder N."/>
            <person name="Nakano N."/>
            <person name="Nakauchi H."/>
            <person name="Ng P."/>
            <person name="Nilsson R."/>
            <person name="Nishiguchi S."/>
            <person name="Nishikawa S."/>
            <person name="Nori F."/>
            <person name="Ohara O."/>
            <person name="Okazaki Y."/>
            <person name="Orlando V."/>
            <person name="Pang K.C."/>
            <person name="Pavan W.J."/>
            <person name="Pavesi G."/>
            <person name="Pesole G."/>
            <person name="Petrovsky N."/>
            <person name="Piazza S."/>
            <person name="Reed J."/>
            <person name="Reid J.F."/>
            <person name="Ring B.Z."/>
            <person name="Ringwald M."/>
            <person name="Rost B."/>
            <person name="Ruan Y."/>
            <person name="Salzberg S.L."/>
            <person name="Sandelin A."/>
            <person name="Schneider C."/>
            <person name="Schoenbach C."/>
            <person name="Sekiguchi K."/>
            <person name="Semple C.A."/>
            <person name="Seno S."/>
            <person name="Sessa L."/>
            <person name="Sheng Y."/>
            <person name="Shibata Y."/>
            <person name="Shimada H."/>
            <person name="Shimada K."/>
            <person name="Silva D."/>
            <person name="Sinclair B."/>
            <person name="Sperling S."/>
            <person name="Stupka E."/>
            <person name="Sugiura K."/>
            <person name="Sultana R."/>
            <person name="Takenaka Y."/>
            <person name="Taki K."/>
            <person name="Tammoja K."/>
            <person name="Tan S.L."/>
            <person name="Tang S."/>
            <person name="Taylor M.S."/>
            <person name="Tegner J."/>
            <person name="Teichmann S.A."/>
            <person name="Ueda H.R."/>
            <person name="van Nimwegen E."/>
            <person name="Verardo R."/>
            <person name="Wei C.L."/>
            <person name="Yagi K."/>
            <person name="Yamanishi H."/>
            <person name="Zabarovsky E."/>
            <person name="Zhu S."/>
            <person name="Zimmer A."/>
            <person name="Hide W."/>
            <person name="Bult C."/>
            <person name="Grimmond S.M."/>
            <person name="Teasdale R.D."/>
            <person name="Liu E.T."/>
            <person name="Brusic V."/>
            <person name="Quackenbush J."/>
            <person name="Wahlestedt C."/>
            <person name="Mattick J.S."/>
            <person name="Hume D.A."/>
            <person name="Kai C."/>
            <person name="Sasaki D."/>
            <person name="Tomaru Y."/>
            <person name="Fukuda S."/>
            <person name="Kanamori-Katayama M."/>
            <person name="Suzuki M."/>
            <person name="Aoki J."/>
            <person name="Arakawa T."/>
            <person name="Iida J."/>
            <person name="Imamura K."/>
            <person name="Itoh M."/>
            <person name="Kato T."/>
            <person name="Kawaji H."/>
            <person name="Kawagashira N."/>
            <person name="Kawashima T."/>
            <person name="Kojima M."/>
            <person name="Kondo S."/>
            <person name="Konno H."/>
            <person name="Nakano K."/>
            <person name="Ninomiya N."/>
            <person name="Nishio T."/>
            <person name="Okada M."/>
            <person name="Plessy C."/>
            <person name="Shibata K."/>
            <person name="Shiraki T."/>
            <person name="Suzuki S."/>
            <person name="Tagami M."/>
            <person name="Waki K."/>
            <person name="Watahiki A."/>
            <person name="Okamura-Oho Y."/>
            <person name="Suzuki H."/>
            <person name="Kawai J."/>
            <person name="Hayashizaki Y."/>
        </authorList>
    </citation>
    <scope>NUCLEOTIDE SEQUENCE [LARGE SCALE MRNA] (ISOFORMS 1 AND 2)</scope>
    <source>
        <strain>C57BL/6J</strain>
        <tissue>Skin</tissue>
        <tissue>Vagina</tissue>
    </source>
</reference>
<reference key="3">
    <citation type="journal article" date="1997" name="J. Cell Biol.">
        <title>Targeted disruption of the pemphigus vulgaris antigen (desmoglein 3) gene in mice causes loss of keratinocyte cell adhesion with a phenotype similar to pemphigus vulgaris.</title>
        <authorList>
            <person name="Koch P.J."/>
            <person name="Mahoney M.G."/>
            <person name="Ishikawa H."/>
            <person name="Pulkkinen L."/>
            <person name="Uitto J."/>
            <person name="Shultz L."/>
            <person name="Murphy G.F."/>
            <person name="Whitaker-Menezes D."/>
            <person name="Stanley J.R."/>
        </authorList>
    </citation>
    <scope>FUNCTION</scope>
    <scope>SUBCELLULAR LOCATION</scope>
    <scope>TISSUE SPECIFICITY</scope>
    <scope>DISRUPTION PHENOTYPE</scope>
</reference>
<reference key="4">
    <citation type="journal article" date="1998" name="J. Cell Sci.">
        <title>Desmoglein 3 anchors telogen hair in the follicle.</title>
        <authorList>
            <person name="Koch P.J."/>
            <person name="Mahoney M.G."/>
            <person name="Cotsarelis G."/>
            <person name="Rothenberger K."/>
            <person name="Lavker R.M."/>
            <person name="Stanley J.R."/>
        </authorList>
    </citation>
    <scope>FUNCTION</scope>
    <scope>SUBCELLULAR LOCATION</scope>
    <scope>TISSUE SPECIFICITY</scope>
    <scope>DISRUPTION PHENOTYPE</scope>
</reference>
<reference key="5">
    <citation type="journal article" date="2003" name="J. Invest. Dermatol.">
        <title>Genomic sequence analysis of the mouse desmoglein cluster reveals evidence for six distinct genes: characterization of mouse DSG4, DSG5, and DSG6.</title>
        <authorList>
            <person name="Whittock N.V."/>
        </authorList>
    </citation>
    <scope>TISSUE SPECIFICITY</scope>
    <scope>DEVELOPMENTAL STAGE</scope>
</reference>
<reference key="6">
    <citation type="journal article" date="2008" name="Exp. Cell Res.">
        <title>P120-catenin is a novel desmoglein 3 interacting partner: identification of the p120-catenin association site of desmoglein 3.</title>
        <authorList>
            <person name="Kanno M."/>
            <person name="Isa Y."/>
            <person name="Aoyama Y."/>
            <person name="Yamamoto Y."/>
            <person name="Nagai M."/>
            <person name="Ozawa M."/>
            <person name="Kitajima Y."/>
        </authorList>
    </citation>
    <scope>INTERACTION WITH CTNND1</scope>
    <scope>SUBCELLULAR LOCATION</scope>
</reference>
<reference key="7">
    <citation type="journal article" date="2016" name="J. Invest. Dermatol.">
        <title>Desmoglein 3-Dependent Signaling Regulates Keratinocyte Migration and Wound Healing.</title>
        <authorList>
            <person name="Roetzer V."/>
            <person name="Hartlieb E."/>
            <person name="Winkler J."/>
            <person name="Walter E."/>
            <person name="Schlipp A."/>
            <person name="Sardy M."/>
            <person name="Spindler V."/>
            <person name="Waschke J."/>
        </authorList>
    </citation>
    <scope>FUNCTION</scope>
    <scope>INTERACTION WITH DSC3</scope>
    <scope>DISRUPTION PHENOTYPE</scope>
</reference>
<reference key="8">
    <citation type="journal article" date="2019" name="Cell. Mol. Life Sci.">
        <title>Plakophilin 1 but not plakophilin 3 regulates desmoglein clustering.</title>
        <authorList>
            <person name="Fuchs M."/>
            <person name="Foresti M."/>
            <person name="Radeva M.Y."/>
            <person name="Kugelmann D."/>
            <person name="Keil R."/>
            <person name="Hatzfeld M."/>
            <person name="Spindler V."/>
            <person name="Waschke J."/>
            <person name="Vielmuth F."/>
        </authorList>
    </citation>
    <scope>SUBUNIT</scope>
</reference>
<protein>
    <recommendedName>
        <fullName>Desmoglein-3</fullName>
    </recommendedName>
    <alternativeName>
        <fullName>130 kDa pemphigus vulgaris antigen homolog</fullName>
    </alternativeName>
</protein>
<proteinExistence type="evidence at protein level"/>
<keyword id="KW-0025">Alternative splicing</keyword>
<keyword id="KW-0106">Calcium</keyword>
<keyword id="KW-0130">Cell adhesion</keyword>
<keyword id="KW-0965">Cell junction</keyword>
<keyword id="KW-1003">Cell membrane</keyword>
<keyword id="KW-0165">Cleavage on pair of basic residues</keyword>
<keyword id="KW-0963">Cytoplasm</keyword>
<keyword id="KW-0325">Glycoprotein</keyword>
<keyword id="KW-0472">Membrane</keyword>
<keyword id="KW-0479">Metal-binding</keyword>
<keyword id="KW-1185">Reference proteome</keyword>
<keyword id="KW-0677">Repeat</keyword>
<keyword id="KW-0732">Signal</keyword>
<keyword id="KW-0796">Tight junction</keyword>
<keyword id="KW-0812">Transmembrane</keyword>
<keyword id="KW-1133">Transmembrane helix</keyword>
<gene>
    <name type="primary">Dsg3</name>
</gene>
<sequence length="993" mass="107889">MTCLFPRALGSLALLMVVLLVQGELHVKPGGQHREDGTALQLAKRRYKREWVKFAKPCREREDNSRRNPIAKITSDFQKNQKITYRISGVGIDQPPFGIFVVDPNNGDINITAIVDREETPSFLITCRALNALGQDVERPLILTVKILDVNDNPPIFSQTIFKGEIEENSASNSLVMILNATDADEPNHMNSKIAFKIVSQEPAGMSMFLISRNTGEVRTLTSSLDREQISSYHLVVSGADNDGTGLSTQCECSIKIKDVNDNFPVLRESQYSARIEENTLNAELLRFQVTDWDEEYTDNWLAVYFFTSGNEGNWFEIETDPRTNEGILKVVKALDYEQVQSMQFSIAVRNKAEFHQSVISQYRVQSTPVTIQVIDVREGISFRPPSKTFTVQRGVSTNKLVGYILGTYQATDEDTGKAASSVRYVLGRNDGGLLVIDSKTAQIKFVKNIDRDSTFIVNKTISAEVLAIDENTGKTSTGTIYVEVPSFNENCPSVVLEKKDICTSSPSVTLSVRTLDRGKYTGPYTVSLEEQPLKLPVMWTITTLNATSALLQAQQQVSPGVYNVPVIVKDNQDGLCDTPESLTLTVCQCDDRSMCRAPIPSREPNTYGESSWRLGPAAIGLILLGLLMLLLAPLLLLTCDCGSGPIGGAATGGFIPVPDGSEGTIHQWGIEGAQPEDKEITNICVPPVTTNGADFMESSEVCTNTYAGGTMVEGASGMEMITKLGGATGATAALGPCSLGYSGTMRTRHSTGGTLKDYAAPVNMTFLGSYFSQKSLAYAEEEDEREVNDCLLIYDDEGEDAAPHSPTLSSCSIFGDDLDDNFLDSLGPKFKKLAEICLGIDDEAKQAKPGPKDSGSGADTCARSMEVPQSGSNRYQTLPGSLEVTQTGSKICHTLSGNQETSVMSTSGSVHPAVAIPDPLQLGNYLLTETYSTSGSFAQPTTVTFDPHVTQNVTVTERVICPLPSASSSIVAPTELRGSYNMLYTKETCSHL</sequence>
<organism>
    <name type="scientific">Mus musculus</name>
    <name type="common">Mouse</name>
    <dbReference type="NCBI Taxonomy" id="10090"/>
    <lineage>
        <taxon>Eukaryota</taxon>
        <taxon>Metazoa</taxon>
        <taxon>Chordata</taxon>
        <taxon>Craniata</taxon>
        <taxon>Vertebrata</taxon>
        <taxon>Euteleostomi</taxon>
        <taxon>Mammalia</taxon>
        <taxon>Eutheria</taxon>
        <taxon>Euarchontoglires</taxon>
        <taxon>Glires</taxon>
        <taxon>Rodentia</taxon>
        <taxon>Myomorpha</taxon>
        <taxon>Muroidea</taxon>
        <taxon>Muridae</taxon>
        <taxon>Murinae</taxon>
        <taxon>Mus</taxon>
        <taxon>Mus</taxon>
    </lineage>
</organism>
<dbReference type="EMBL" id="U86016">
    <property type="protein sequence ID" value="AAB65091.1"/>
    <property type="molecule type" value="mRNA"/>
</dbReference>
<dbReference type="EMBL" id="AK029018">
    <property type="protein sequence ID" value="BAC26246.1"/>
    <property type="molecule type" value="mRNA"/>
</dbReference>
<dbReference type="EMBL" id="AK037142">
    <property type="protein sequence ID" value="BAC29718.1"/>
    <property type="molecule type" value="mRNA"/>
</dbReference>
<dbReference type="CCDS" id="CCDS29083.1">
    <molecule id="O35902-1"/>
</dbReference>
<dbReference type="RefSeq" id="NP_085099.2">
    <property type="nucleotide sequence ID" value="NM_030596.4"/>
</dbReference>
<dbReference type="SMR" id="O35902"/>
<dbReference type="FunCoup" id="O35902">
    <property type="interactions" value="48"/>
</dbReference>
<dbReference type="STRING" id="10090.ENSMUSP00000064718"/>
<dbReference type="GlyCosmos" id="O35902">
    <property type="glycosylation" value="4 sites, No reported glycans"/>
</dbReference>
<dbReference type="GlyGen" id="O35902">
    <property type="glycosylation" value="4 sites"/>
</dbReference>
<dbReference type="iPTMnet" id="O35902"/>
<dbReference type="PhosphoSitePlus" id="O35902"/>
<dbReference type="PaxDb" id="10090-ENSMUSP00000064718"/>
<dbReference type="PeptideAtlas" id="O35902"/>
<dbReference type="ProteomicsDB" id="279812">
    <molecule id="O35902-1"/>
</dbReference>
<dbReference type="ProteomicsDB" id="279813">
    <molecule id="O35902-2"/>
</dbReference>
<dbReference type="DNASU" id="13512"/>
<dbReference type="GeneID" id="13512"/>
<dbReference type="KEGG" id="mmu:13512"/>
<dbReference type="AGR" id="MGI:99499"/>
<dbReference type="CTD" id="1830"/>
<dbReference type="MGI" id="MGI:99499">
    <property type="gene designation" value="Dsg3"/>
</dbReference>
<dbReference type="eggNOG" id="KOG3594">
    <property type="taxonomic scope" value="Eukaryota"/>
</dbReference>
<dbReference type="InParanoid" id="O35902"/>
<dbReference type="OrthoDB" id="8961010at2759"/>
<dbReference type="PhylomeDB" id="O35902"/>
<dbReference type="Reactome" id="R-MMU-351906">
    <property type="pathway name" value="Apoptotic cleavage of cell adhesion proteins"/>
</dbReference>
<dbReference type="Reactome" id="R-MMU-6805567">
    <property type="pathway name" value="Keratinization"/>
</dbReference>
<dbReference type="Reactome" id="R-MMU-6809371">
    <property type="pathway name" value="Formation of the cornified envelope"/>
</dbReference>
<dbReference type="BioGRID-ORCS" id="13512">
    <property type="hits" value="1 hit in 79 CRISPR screens"/>
</dbReference>
<dbReference type="PRO" id="PR:O35902"/>
<dbReference type="Proteomes" id="UP000000589">
    <property type="component" value="Unplaced"/>
</dbReference>
<dbReference type="RNAct" id="O35902">
    <property type="molecule type" value="protein"/>
</dbReference>
<dbReference type="GO" id="GO:0005912">
    <property type="term" value="C:adherens junction"/>
    <property type="evidence" value="ECO:0000250"/>
    <property type="project" value="UniProtKB"/>
</dbReference>
<dbReference type="GO" id="GO:0005923">
    <property type="term" value="C:bicellular tight junction"/>
    <property type="evidence" value="ECO:0007669"/>
    <property type="project" value="UniProtKB-SubCell"/>
</dbReference>
<dbReference type="GO" id="GO:0005737">
    <property type="term" value="C:cytoplasm"/>
    <property type="evidence" value="ECO:0000250"/>
    <property type="project" value="UniProtKB"/>
</dbReference>
<dbReference type="GO" id="GO:0030057">
    <property type="term" value="C:desmosome"/>
    <property type="evidence" value="ECO:0000304"/>
    <property type="project" value="MGI"/>
</dbReference>
<dbReference type="GO" id="GO:0005886">
    <property type="term" value="C:plasma membrane"/>
    <property type="evidence" value="ECO:0000314"/>
    <property type="project" value="UniProtKB"/>
</dbReference>
<dbReference type="GO" id="GO:0005914">
    <property type="term" value="C:spot adherens junction"/>
    <property type="evidence" value="ECO:0000304"/>
    <property type="project" value="MGI"/>
</dbReference>
<dbReference type="GO" id="GO:0070160">
    <property type="term" value="C:tight junction"/>
    <property type="evidence" value="ECO:0000250"/>
    <property type="project" value="UniProtKB"/>
</dbReference>
<dbReference type="GO" id="GO:0005509">
    <property type="term" value="F:calcium ion binding"/>
    <property type="evidence" value="ECO:0007669"/>
    <property type="project" value="InterPro"/>
</dbReference>
<dbReference type="GO" id="GO:0046983">
    <property type="term" value="F:protein dimerization activity"/>
    <property type="evidence" value="ECO:0000314"/>
    <property type="project" value="UniProtKB"/>
</dbReference>
<dbReference type="GO" id="GO:0007015">
    <property type="term" value="P:actin filament organization"/>
    <property type="evidence" value="ECO:0000250"/>
    <property type="project" value="UniProtKB"/>
</dbReference>
<dbReference type="GO" id="GO:0007155">
    <property type="term" value="P:cell adhesion"/>
    <property type="evidence" value="ECO:0000304"/>
    <property type="project" value="MGI"/>
</dbReference>
<dbReference type="GO" id="GO:0002159">
    <property type="term" value="P:desmosome assembly"/>
    <property type="evidence" value="ECO:0000315"/>
    <property type="project" value="UniProtKB"/>
</dbReference>
<dbReference type="GO" id="GO:0007156">
    <property type="term" value="P:homophilic cell adhesion via plasma membrane adhesion molecules"/>
    <property type="evidence" value="ECO:0007669"/>
    <property type="project" value="InterPro"/>
</dbReference>
<dbReference type="GO" id="GO:0030336">
    <property type="term" value="P:negative regulation of cell migration"/>
    <property type="evidence" value="ECO:0000315"/>
    <property type="project" value="UniProtKB"/>
</dbReference>
<dbReference type="GO" id="GO:1903753">
    <property type="term" value="P:negative regulation of p38MAPK cascade"/>
    <property type="evidence" value="ECO:0000315"/>
    <property type="project" value="UniProtKB"/>
</dbReference>
<dbReference type="GO" id="GO:1903348">
    <property type="term" value="P:positive regulation of bicellular tight junction assembly"/>
    <property type="evidence" value="ECO:0000250"/>
    <property type="project" value="UniProtKB"/>
</dbReference>
<dbReference type="GO" id="GO:1904704">
    <property type="term" value="P:positive regulation of protein localization to adherens junction"/>
    <property type="evidence" value="ECO:0000250"/>
    <property type="project" value="UniProtKB"/>
</dbReference>
<dbReference type="GO" id="GO:0031647">
    <property type="term" value="P:regulation of protein stability"/>
    <property type="evidence" value="ECO:0000250"/>
    <property type="project" value="UniProtKB"/>
</dbReference>
<dbReference type="CDD" id="cd11304">
    <property type="entry name" value="Cadherin_repeat"/>
    <property type="match status" value="4"/>
</dbReference>
<dbReference type="FunFam" id="2.60.40.60:FF:000011">
    <property type="entry name" value="Cadherin 1"/>
    <property type="match status" value="1"/>
</dbReference>
<dbReference type="FunFam" id="2.60.40.60:FF:000031">
    <property type="entry name" value="Cadherin 3"/>
    <property type="match status" value="1"/>
</dbReference>
<dbReference type="FunFam" id="2.60.40.60:FF:000068">
    <property type="entry name" value="Desmoglein 1"/>
    <property type="match status" value="1"/>
</dbReference>
<dbReference type="FunFam" id="2.60.40.60:FF:000083">
    <property type="entry name" value="Desmoglein 1"/>
    <property type="match status" value="1"/>
</dbReference>
<dbReference type="FunFam" id="4.10.900.10:FF:000003">
    <property type="entry name" value="Desmoglein 1"/>
    <property type="match status" value="1"/>
</dbReference>
<dbReference type="FunFam" id="2.60.40.60:FF:000074">
    <property type="entry name" value="Desmoglein 4"/>
    <property type="match status" value="1"/>
</dbReference>
<dbReference type="Gene3D" id="2.60.40.60">
    <property type="entry name" value="Cadherins"/>
    <property type="match status" value="5"/>
</dbReference>
<dbReference type="Gene3D" id="4.10.900.10">
    <property type="entry name" value="TCF3-CBD (Catenin binding domain)"/>
    <property type="match status" value="1"/>
</dbReference>
<dbReference type="InterPro" id="IPR050971">
    <property type="entry name" value="Cadherin-domain_protein"/>
</dbReference>
<dbReference type="InterPro" id="IPR002126">
    <property type="entry name" value="Cadherin-like_dom"/>
</dbReference>
<dbReference type="InterPro" id="IPR015919">
    <property type="entry name" value="Cadherin-like_sf"/>
</dbReference>
<dbReference type="InterPro" id="IPR020894">
    <property type="entry name" value="Cadherin_CS"/>
</dbReference>
<dbReference type="InterPro" id="IPR027397">
    <property type="entry name" value="Catenin-bd_sf"/>
</dbReference>
<dbReference type="InterPro" id="IPR009122">
    <property type="entry name" value="Desmosomal_cadherin"/>
</dbReference>
<dbReference type="PANTHER" id="PTHR24025">
    <property type="entry name" value="DESMOGLEIN FAMILY MEMBER"/>
    <property type="match status" value="1"/>
</dbReference>
<dbReference type="PANTHER" id="PTHR24025:SF3">
    <property type="entry name" value="DESMOGLEIN-3"/>
    <property type="match status" value="1"/>
</dbReference>
<dbReference type="Pfam" id="PF00028">
    <property type="entry name" value="Cadherin"/>
    <property type="match status" value="4"/>
</dbReference>
<dbReference type="PRINTS" id="PR00205">
    <property type="entry name" value="CADHERIN"/>
</dbReference>
<dbReference type="PRINTS" id="PR01818">
    <property type="entry name" value="DESMOCADHERN"/>
</dbReference>
<dbReference type="PRINTS" id="PR01819">
    <property type="entry name" value="DESMOGLEIN"/>
</dbReference>
<dbReference type="SMART" id="SM00112">
    <property type="entry name" value="CA"/>
    <property type="match status" value="4"/>
</dbReference>
<dbReference type="SUPFAM" id="SSF49313">
    <property type="entry name" value="Cadherin-like"/>
    <property type="match status" value="4"/>
</dbReference>
<dbReference type="PROSITE" id="PS00232">
    <property type="entry name" value="CADHERIN_1"/>
    <property type="match status" value="2"/>
</dbReference>
<dbReference type="PROSITE" id="PS50268">
    <property type="entry name" value="CADHERIN_2"/>
    <property type="match status" value="4"/>
</dbReference>